<feature type="chain" id="PRO_0000204923" description="DNA repair protein RecO">
    <location>
        <begin position="1"/>
        <end position="296"/>
    </location>
</feature>
<proteinExistence type="inferred from homology"/>
<keyword id="KW-0227">DNA damage</keyword>
<keyword id="KW-0233">DNA recombination</keyword>
<keyword id="KW-0234">DNA repair</keyword>
<keyword id="KW-1185">Reference proteome</keyword>
<reference key="1">
    <citation type="journal article" date="2001" name="DNA Res.">
        <title>Complete genomic sequence of the filamentous nitrogen-fixing cyanobacterium Anabaena sp. strain PCC 7120.</title>
        <authorList>
            <person name="Kaneko T."/>
            <person name="Nakamura Y."/>
            <person name="Wolk C.P."/>
            <person name="Kuritz T."/>
            <person name="Sasamoto S."/>
            <person name="Watanabe A."/>
            <person name="Iriguchi M."/>
            <person name="Ishikawa A."/>
            <person name="Kawashima K."/>
            <person name="Kimura T."/>
            <person name="Kishida Y."/>
            <person name="Kohara M."/>
            <person name="Matsumoto M."/>
            <person name="Matsuno A."/>
            <person name="Muraki A."/>
            <person name="Nakazaki N."/>
            <person name="Shimpo S."/>
            <person name="Sugimoto M."/>
            <person name="Takazawa M."/>
            <person name="Yamada M."/>
            <person name="Yasuda M."/>
            <person name="Tabata S."/>
        </authorList>
    </citation>
    <scope>NUCLEOTIDE SEQUENCE [LARGE SCALE GENOMIC DNA]</scope>
    <source>
        <strain>PCC 7120 / SAG 25.82 / UTEX 2576</strain>
    </source>
</reference>
<name>RECO_NOSS1</name>
<organism>
    <name type="scientific">Nostoc sp. (strain PCC 7120 / SAG 25.82 / UTEX 2576)</name>
    <dbReference type="NCBI Taxonomy" id="103690"/>
    <lineage>
        <taxon>Bacteria</taxon>
        <taxon>Bacillati</taxon>
        <taxon>Cyanobacteriota</taxon>
        <taxon>Cyanophyceae</taxon>
        <taxon>Nostocales</taxon>
        <taxon>Nostocaceae</taxon>
        <taxon>Nostoc</taxon>
    </lineage>
</organism>
<comment type="function">
    <text evidence="1">Involved in DNA repair and RecF pathway recombination.</text>
</comment>
<comment type="similarity">
    <text evidence="2">Belongs to the RecO family.</text>
</comment>
<evidence type="ECO:0000250" key="1"/>
<evidence type="ECO:0000305" key="2"/>
<dbReference type="EMBL" id="BA000019">
    <property type="protein sequence ID" value="BAB75874.1"/>
    <property type="molecule type" value="Genomic_DNA"/>
</dbReference>
<dbReference type="PIR" id="AH2327">
    <property type="entry name" value="AH2327"/>
</dbReference>
<dbReference type="RefSeq" id="WP_010998314.1">
    <property type="nucleotide sequence ID" value="NZ_RSCN01000010.1"/>
</dbReference>
<dbReference type="SMR" id="Q8YPL9"/>
<dbReference type="STRING" id="103690.gene:10496224"/>
<dbReference type="KEGG" id="ana:alr4175"/>
<dbReference type="eggNOG" id="COG1381">
    <property type="taxonomic scope" value="Bacteria"/>
</dbReference>
<dbReference type="OrthoDB" id="9797083at2"/>
<dbReference type="Proteomes" id="UP000002483">
    <property type="component" value="Chromosome"/>
</dbReference>
<dbReference type="GO" id="GO:0043590">
    <property type="term" value="C:bacterial nucleoid"/>
    <property type="evidence" value="ECO:0007669"/>
    <property type="project" value="TreeGrafter"/>
</dbReference>
<dbReference type="GO" id="GO:0006310">
    <property type="term" value="P:DNA recombination"/>
    <property type="evidence" value="ECO:0007669"/>
    <property type="project" value="UniProtKB-UniRule"/>
</dbReference>
<dbReference type="GO" id="GO:0006302">
    <property type="term" value="P:double-strand break repair"/>
    <property type="evidence" value="ECO:0007669"/>
    <property type="project" value="TreeGrafter"/>
</dbReference>
<dbReference type="Gene3D" id="2.40.50.140">
    <property type="entry name" value="Nucleic acid-binding proteins"/>
    <property type="match status" value="1"/>
</dbReference>
<dbReference type="Gene3D" id="1.20.1440.120">
    <property type="entry name" value="Recombination protein O, C-terminal domain"/>
    <property type="match status" value="1"/>
</dbReference>
<dbReference type="HAMAP" id="MF_00201">
    <property type="entry name" value="RecO"/>
    <property type="match status" value="1"/>
</dbReference>
<dbReference type="InterPro" id="IPR037278">
    <property type="entry name" value="ARFGAP/RecO"/>
</dbReference>
<dbReference type="InterPro" id="IPR022572">
    <property type="entry name" value="DNA_rep/recomb_RecO_N"/>
</dbReference>
<dbReference type="InterPro" id="IPR012340">
    <property type="entry name" value="NA-bd_OB-fold"/>
</dbReference>
<dbReference type="InterPro" id="IPR003717">
    <property type="entry name" value="RecO"/>
</dbReference>
<dbReference type="InterPro" id="IPR042242">
    <property type="entry name" value="RecO_C"/>
</dbReference>
<dbReference type="NCBIfam" id="TIGR00613">
    <property type="entry name" value="reco"/>
    <property type="match status" value="1"/>
</dbReference>
<dbReference type="PANTHER" id="PTHR33991">
    <property type="entry name" value="DNA REPAIR PROTEIN RECO"/>
    <property type="match status" value="1"/>
</dbReference>
<dbReference type="PANTHER" id="PTHR33991:SF1">
    <property type="entry name" value="DNA REPAIR PROTEIN RECO"/>
    <property type="match status" value="1"/>
</dbReference>
<dbReference type="Pfam" id="PF02565">
    <property type="entry name" value="RecO_C"/>
    <property type="match status" value="1"/>
</dbReference>
<dbReference type="Pfam" id="PF11967">
    <property type="entry name" value="RecO_N"/>
    <property type="match status" value="1"/>
</dbReference>
<dbReference type="SUPFAM" id="SSF57863">
    <property type="entry name" value="ArfGap/RecO-like zinc finger"/>
    <property type="match status" value="1"/>
</dbReference>
<dbReference type="SUPFAM" id="SSF50249">
    <property type="entry name" value="Nucleic acid-binding proteins"/>
    <property type="match status" value="1"/>
</dbReference>
<gene>
    <name type="primary">recO</name>
    <name type="ordered locus">alr4175</name>
</gene>
<accession>Q8YPL9</accession>
<sequence length="296" mass="32729">MNKTYKATGINLKAQAMGESDRIVTILTQEFGLIRAIAPGSRKHNSSLGGRSAMFVVNELLIAKGRSLDKITQAQTIKTYPGLAKDLGKLAASQYLAEIVLCQALSEQPQEELYELLNEHLHRLEELPKGESFGVLAYLAHAVFHLLALAGLTPQVQICCLTQRSLTPDFADPNWRVGFSIASGGIVCLEAWEGLRKEARKESKEKSLPHPVTPAYQTVVHRQEIPVISARLNSVELGMLQQLSQPEIMQINTTSDASWLSVEQILRQYAQYHLGRPIRSATLIDSYFAANHDATV</sequence>
<protein>
    <recommendedName>
        <fullName>DNA repair protein RecO</fullName>
    </recommendedName>
    <alternativeName>
        <fullName>Recombination protein O</fullName>
    </alternativeName>
</protein>